<keyword id="KW-0963">Cytoplasm</keyword>
<keyword id="KW-0378">Hydrolase</keyword>
<keyword id="KW-0507">mRNA processing</keyword>
<keyword id="KW-0539">Nucleus</keyword>
<keyword id="KW-0904">Protein phosphatase</keyword>
<keyword id="KW-1185">Reference proteome</keyword>
<protein>
    <recommendedName>
        <fullName>RNA polymerase II subunit A C-terminal domain phosphatase ssu72</fullName>
        <shortName>CTD phosphatase ssu72</shortName>
        <ecNumber>3.1.3.16</ecNumber>
    </recommendedName>
    <alternativeName>
        <fullName>Suppressor of SUA7 protein 2 homolog</fullName>
    </alternativeName>
</protein>
<comment type="function">
    <text evidence="1">Processively dephosphorylates Ser-5 of the heptad repeats YSPTSPS in the C-terminal domain of the largest RNA polymerase II subunit (rpb1).</text>
</comment>
<comment type="function">
    <text evidence="1">Component of the cleavage and polyadenylation factor (CPF) complex, which plays a key role in polyadenylation-dependent pre-mRNA 3'-end formation and cooperates with cleavage factors including the CFIA complex and NAB4/CFIB. Ssu72 is required for 3'-end formation of snoRNAs (By similarity).</text>
</comment>
<comment type="catalytic activity">
    <reaction>
        <text>O-phospho-L-seryl-[protein] + H2O = L-seryl-[protein] + phosphate</text>
        <dbReference type="Rhea" id="RHEA:20629"/>
        <dbReference type="Rhea" id="RHEA-COMP:9863"/>
        <dbReference type="Rhea" id="RHEA-COMP:11604"/>
        <dbReference type="ChEBI" id="CHEBI:15377"/>
        <dbReference type="ChEBI" id="CHEBI:29999"/>
        <dbReference type="ChEBI" id="CHEBI:43474"/>
        <dbReference type="ChEBI" id="CHEBI:83421"/>
        <dbReference type="EC" id="3.1.3.16"/>
    </reaction>
</comment>
<comment type="catalytic activity">
    <reaction>
        <text>O-phospho-L-threonyl-[protein] + H2O = L-threonyl-[protein] + phosphate</text>
        <dbReference type="Rhea" id="RHEA:47004"/>
        <dbReference type="Rhea" id="RHEA-COMP:11060"/>
        <dbReference type="Rhea" id="RHEA-COMP:11605"/>
        <dbReference type="ChEBI" id="CHEBI:15377"/>
        <dbReference type="ChEBI" id="CHEBI:30013"/>
        <dbReference type="ChEBI" id="CHEBI:43474"/>
        <dbReference type="ChEBI" id="CHEBI:61977"/>
        <dbReference type="EC" id="3.1.3.16"/>
    </reaction>
</comment>
<comment type="subunit">
    <text evidence="2">Component of the cleavage and polyadenylation factor (CPF) complex, which is composed of cft1, cft2, ysh1, pta1, swd2, pfs2, dis2, yth1, ssu72, and fip1.</text>
</comment>
<comment type="subcellular location">
    <subcellularLocation>
        <location evidence="3">Cytoplasm</location>
    </subcellularLocation>
    <subcellularLocation>
        <location evidence="3">Nucleus</location>
    </subcellularLocation>
</comment>
<comment type="similarity">
    <text evidence="4">Belongs to the SSU72 phosphatase family.</text>
</comment>
<evidence type="ECO:0000250" key="1"/>
<evidence type="ECO:0000269" key="2">
    <source>
    </source>
</evidence>
<evidence type="ECO:0000269" key="3">
    <source>
    </source>
</evidence>
<evidence type="ECO:0000305" key="4"/>
<proteinExistence type="evidence at protein level"/>
<feature type="chain" id="PRO_0000255612" description="RNA polymerase II subunit A C-terminal domain phosphatase ssu72">
    <location>
        <begin position="1"/>
        <end position="197"/>
    </location>
</feature>
<accession>O42868</accession>
<name>SSU72_SCHPO</name>
<sequence length="197" mass="22596">MAPKTNLQISVICASNQNRSMEAHNVLKNAGYQVDSFGTGSAVRLPGPSIDKPNIYQFGYPYDEIYKELEAQDSRLYTANGLLKMLDRNRRIKRAPCRWQDQDSIYNIVITCEERCYDAICEDLYRRGETLNRPVYLINVDIKDNHEEASVGGKAILDLVNKLTEAQDKLEELFPSIMADFQSNHPKLPVLYTIHFF</sequence>
<reference key="1">
    <citation type="journal article" date="2002" name="Nature">
        <title>The genome sequence of Schizosaccharomyces pombe.</title>
        <authorList>
            <person name="Wood V."/>
            <person name="Gwilliam R."/>
            <person name="Rajandream M.A."/>
            <person name="Lyne M.H."/>
            <person name="Lyne R."/>
            <person name="Stewart A."/>
            <person name="Sgouros J.G."/>
            <person name="Peat N."/>
            <person name="Hayles J."/>
            <person name="Baker S.G."/>
            <person name="Basham D."/>
            <person name="Bowman S."/>
            <person name="Brooks K."/>
            <person name="Brown D."/>
            <person name="Brown S."/>
            <person name="Chillingworth T."/>
            <person name="Churcher C.M."/>
            <person name="Collins M."/>
            <person name="Connor R."/>
            <person name="Cronin A."/>
            <person name="Davis P."/>
            <person name="Feltwell T."/>
            <person name="Fraser A."/>
            <person name="Gentles S."/>
            <person name="Goble A."/>
            <person name="Hamlin N."/>
            <person name="Harris D.E."/>
            <person name="Hidalgo J."/>
            <person name="Hodgson G."/>
            <person name="Holroyd S."/>
            <person name="Hornsby T."/>
            <person name="Howarth S."/>
            <person name="Huckle E.J."/>
            <person name="Hunt S."/>
            <person name="Jagels K."/>
            <person name="James K.D."/>
            <person name="Jones L."/>
            <person name="Jones M."/>
            <person name="Leather S."/>
            <person name="McDonald S."/>
            <person name="McLean J."/>
            <person name="Mooney P."/>
            <person name="Moule S."/>
            <person name="Mungall K.L."/>
            <person name="Murphy L.D."/>
            <person name="Niblett D."/>
            <person name="Odell C."/>
            <person name="Oliver K."/>
            <person name="O'Neil S."/>
            <person name="Pearson D."/>
            <person name="Quail M.A."/>
            <person name="Rabbinowitsch E."/>
            <person name="Rutherford K.M."/>
            <person name="Rutter S."/>
            <person name="Saunders D."/>
            <person name="Seeger K."/>
            <person name="Sharp S."/>
            <person name="Skelton J."/>
            <person name="Simmonds M.N."/>
            <person name="Squares R."/>
            <person name="Squares S."/>
            <person name="Stevens K."/>
            <person name="Taylor K."/>
            <person name="Taylor R.G."/>
            <person name="Tivey A."/>
            <person name="Walsh S.V."/>
            <person name="Warren T."/>
            <person name="Whitehead S."/>
            <person name="Woodward J.R."/>
            <person name="Volckaert G."/>
            <person name="Aert R."/>
            <person name="Robben J."/>
            <person name="Grymonprez B."/>
            <person name="Weltjens I."/>
            <person name="Vanstreels E."/>
            <person name="Rieger M."/>
            <person name="Schaefer M."/>
            <person name="Mueller-Auer S."/>
            <person name="Gabel C."/>
            <person name="Fuchs M."/>
            <person name="Duesterhoeft A."/>
            <person name="Fritzc C."/>
            <person name="Holzer E."/>
            <person name="Moestl D."/>
            <person name="Hilbert H."/>
            <person name="Borzym K."/>
            <person name="Langer I."/>
            <person name="Beck A."/>
            <person name="Lehrach H."/>
            <person name="Reinhardt R."/>
            <person name="Pohl T.M."/>
            <person name="Eger P."/>
            <person name="Zimmermann W."/>
            <person name="Wedler H."/>
            <person name="Wambutt R."/>
            <person name="Purnelle B."/>
            <person name="Goffeau A."/>
            <person name="Cadieu E."/>
            <person name="Dreano S."/>
            <person name="Gloux S."/>
            <person name="Lelaure V."/>
            <person name="Mottier S."/>
            <person name="Galibert F."/>
            <person name="Aves S.J."/>
            <person name="Xiang Z."/>
            <person name="Hunt C."/>
            <person name="Moore K."/>
            <person name="Hurst S.M."/>
            <person name="Lucas M."/>
            <person name="Rochet M."/>
            <person name="Gaillardin C."/>
            <person name="Tallada V.A."/>
            <person name="Garzon A."/>
            <person name="Thode G."/>
            <person name="Daga R.R."/>
            <person name="Cruzado L."/>
            <person name="Jimenez J."/>
            <person name="Sanchez M."/>
            <person name="del Rey F."/>
            <person name="Benito J."/>
            <person name="Dominguez A."/>
            <person name="Revuelta J.L."/>
            <person name="Moreno S."/>
            <person name="Armstrong J."/>
            <person name="Forsburg S.L."/>
            <person name="Cerutti L."/>
            <person name="Lowe T."/>
            <person name="McCombie W.R."/>
            <person name="Paulsen I."/>
            <person name="Potashkin J."/>
            <person name="Shpakovski G.V."/>
            <person name="Ussery D."/>
            <person name="Barrell B.G."/>
            <person name="Nurse P."/>
        </authorList>
    </citation>
    <scope>NUCLEOTIDE SEQUENCE [LARGE SCALE GENOMIC DNA]</scope>
    <source>
        <strain>972 / ATCC 24843</strain>
    </source>
</reference>
<reference key="2">
    <citation type="journal article" date="2004" name="Mol. Cell. Proteomics">
        <title>A comparative analysis of an orthologous proteomic environment in the yeasts Saccharomyces cerevisiae and Schizosaccharomyces pombe.</title>
        <authorList>
            <person name="Roguev A."/>
            <person name="Shevchenko A."/>
            <person name="Schaft D."/>
            <person name="Thomas H."/>
            <person name="Stewart A.F."/>
            <person name="Shevchenko A."/>
        </authorList>
    </citation>
    <scope>IDENTIFICATION IN THE CPF COMPLEX</scope>
</reference>
<reference key="3">
    <citation type="journal article" date="2006" name="Nat. Biotechnol.">
        <title>ORFeome cloning and global analysis of protein localization in the fission yeast Schizosaccharomyces pombe.</title>
        <authorList>
            <person name="Matsuyama A."/>
            <person name="Arai R."/>
            <person name="Yashiroda Y."/>
            <person name="Shirai A."/>
            <person name="Kamata A."/>
            <person name="Sekido S."/>
            <person name="Kobayashi Y."/>
            <person name="Hashimoto A."/>
            <person name="Hamamoto M."/>
            <person name="Hiraoka Y."/>
            <person name="Horinouchi S."/>
            <person name="Yoshida M."/>
        </authorList>
    </citation>
    <scope>SUBCELLULAR LOCATION [LARGE SCALE ANALYSIS]</scope>
</reference>
<organism>
    <name type="scientific">Schizosaccharomyces pombe (strain 972 / ATCC 24843)</name>
    <name type="common">Fission yeast</name>
    <dbReference type="NCBI Taxonomy" id="284812"/>
    <lineage>
        <taxon>Eukaryota</taxon>
        <taxon>Fungi</taxon>
        <taxon>Dikarya</taxon>
        <taxon>Ascomycota</taxon>
        <taxon>Taphrinomycotina</taxon>
        <taxon>Schizosaccharomycetes</taxon>
        <taxon>Schizosaccharomycetales</taxon>
        <taxon>Schizosaccharomycetaceae</taxon>
        <taxon>Schizosaccharomyces</taxon>
    </lineage>
</organism>
<dbReference type="EC" id="3.1.3.16"/>
<dbReference type="EMBL" id="CU329670">
    <property type="protein sequence ID" value="CAA15913.1"/>
    <property type="molecule type" value="Genomic_DNA"/>
</dbReference>
<dbReference type="PIR" id="T11640">
    <property type="entry name" value="T11640"/>
</dbReference>
<dbReference type="RefSeq" id="NP_594076.1">
    <property type="nucleotide sequence ID" value="NM_001019509.2"/>
</dbReference>
<dbReference type="SMR" id="O42868"/>
<dbReference type="BioGRID" id="279872">
    <property type="interactions" value="187"/>
</dbReference>
<dbReference type="FunCoup" id="O42868">
    <property type="interactions" value="626"/>
</dbReference>
<dbReference type="STRING" id="284812.O42868"/>
<dbReference type="PaxDb" id="4896-SPAC3G9.04.1"/>
<dbReference type="EnsemblFungi" id="SPAC3G9.04.1">
    <property type="protein sequence ID" value="SPAC3G9.04.1:pep"/>
    <property type="gene ID" value="SPAC3G9.04"/>
</dbReference>
<dbReference type="GeneID" id="2543452"/>
<dbReference type="KEGG" id="spo:2543452"/>
<dbReference type="PomBase" id="SPAC3G9.04">
    <property type="gene designation" value="ssu72"/>
</dbReference>
<dbReference type="VEuPathDB" id="FungiDB:SPAC3G9.04"/>
<dbReference type="eggNOG" id="KOG2424">
    <property type="taxonomic scope" value="Eukaryota"/>
</dbReference>
<dbReference type="HOGENOM" id="CLU_062463_2_1_1"/>
<dbReference type="InParanoid" id="O42868"/>
<dbReference type="OMA" id="TQPNVYQ"/>
<dbReference type="PhylomeDB" id="O42868"/>
<dbReference type="PRO" id="PR:O42868"/>
<dbReference type="Proteomes" id="UP000002485">
    <property type="component" value="Chromosome I"/>
</dbReference>
<dbReference type="GO" id="GO:0000785">
    <property type="term" value="C:chromatin"/>
    <property type="evidence" value="ECO:0000314"/>
    <property type="project" value="PomBase"/>
</dbReference>
<dbReference type="GO" id="GO:0005829">
    <property type="term" value="C:cytosol"/>
    <property type="evidence" value="ECO:0007005"/>
    <property type="project" value="PomBase"/>
</dbReference>
<dbReference type="GO" id="GO:0005847">
    <property type="term" value="C:mRNA cleavage and polyadenylation specificity factor complex"/>
    <property type="evidence" value="ECO:0000314"/>
    <property type="project" value="PomBase"/>
</dbReference>
<dbReference type="GO" id="GO:0005634">
    <property type="term" value="C:nucleus"/>
    <property type="evidence" value="ECO:0007005"/>
    <property type="project" value="PomBase"/>
</dbReference>
<dbReference type="GO" id="GO:0004722">
    <property type="term" value="F:protein serine/threonine phosphatase activity"/>
    <property type="evidence" value="ECO:0000315"/>
    <property type="project" value="PomBase"/>
</dbReference>
<dbReference type="GO" id="GO:0008420">
    <property type="term" value="F:RNA polymerase II CTD heptapeptide repeat phosphatase activity"/>
    <property type="evidence" value="ECO:0000318"/>
    <property type="project" value="GO_Central"/>
</dbReference>
<dbReference type="GO" id="GO:0180007">
    <property type="term" value="F:RNA polymerase II CTD heptapeptide repeat S5 phosphatase activity"/>
    <property type="evidence" value="ECO:0000314"/>
    <property type="project" value="PomBase"/>
</dbReference>
<dbReference type="GO" id="GO:0180010">
    <property type="term" value="P:co-transcriptional mRNA 3'-end processing, cleavage and polyadenylation pathway"/>
    <property type="evidence" value="ECO:0000305"/>
    <property type="project" value="PomBase"/>
</dbReference>
<dbReference type="GO" id="GO:0030643">
    <property type="term" value="P:intracellular phosphate ion homeostasis"/>
    <property type="evidence" value="ECO:0000315"/>
    <property type="project" value="PomBase"/>
</dbReference>
<dbReference type="GO" id="GO:0032215">
    <property type="term" value="P:positive regulation of telomere maintenance via semi-conservative replication"/>
    <property type="evidence" value="ECO:0000315"/>
    <property type="project" value="PomBase"/>
</dbReference>
<dbReference type="GO" id="GO:0090052">
    <property type="term" value="P:regulation of pericentric heterochromatin formation"/>
    <property type="evidence" value="ECO:0000315"/>
    <property type="project" value="PomBase"/>
</dbReference>
<dbReference type="GO" id="GO:1902801">
    <property type="term" value="P:regulation of siRNA-independent facultative heterochromatin formation"/>
    <property type="evidence" value="ECO:0000315"/>
    <property type="project" value="PomBase"/>
</dbReference>
<dbReference type="GO" id="GO:0023052">
    <property type="term" value="P:signaling"/>
    <property type="evidence" value="ECO:0000303"/>
    <property type="project" value="PomBase"/>
</dbReference>
<dbReference type="GO" id="GO:0006369">
    <property type="term" value="P:termination of RNA polymerase II transcription"/>
    <property type="evidence" value="ECO:0000318"/>
    <property type="project" value="GO_Central"/>
</dbReference>
<dbReference type="FunFam" id="3.40.50.2300:FF:000182">
    <property type="entry name" value="RNA polymerase II subunit A"/>
    <property type="match status" value="1"/>
</dbReference>
<dbReference type="FunFam" id="3.40.50.2300:FF:000039">
    <property type="entry name" value="RNA polymerase II subunit A C-terminal domain phosphatase"/>
    <property type="match status" value="1"/>
</dbReference>
<dbReference type="Gene3D" id="3.40.50.2300">
    <property type="match status" value="2"/>
</dbReference>
<dbReference type="InterPro" id="IPR006811">
    <property type="entry name" value="RNA_pol_II_suA"/>
</dbReference>
<dbReference type="PANTHER" id="PTHR20383">
    <property type="entry name" value="RNA POLYMERASE II SUBUNIT A C-TERMINAL DOMAIN PHOSPHATASE"/>
    <property type="match status" value="1"/>
</dbReference>
<dbReference type="Pfam" id="PF04722">
    <property type="entry name" value="Ssu72"/>
    <property type="match status" value="1"/>
</dbReference>
<gene>
    <name type="primary">ssu72</name>
    <name type="ORF">SPAC3G9.04</name>
</gene>